<name>SLP1_PINMG</name>
<sequence length="349" mass="36200">MLKLVCAVFLIATVSAKGYDTGSRYSIGNYLSGYSGYGIGNRYSIGNYLSGYNGYDRGSRYSIGNYLPGYSGYGTGSRYSIGNYLPGYSGYGTGSRYSIGNYLPEYSGYGTGNRYSIGNYLPEYSGYGIGSRYSIGNYLPGYSGYGTGNRYSIGNYLPEYSGYGTSSRYSIGNYLSGYSGYGTGSRYSIGNYLSGYSRYGTGSRYSIGSYLSRYSGYGTGSRYSIGNYLSGYSGYGIGNRYSIGNYLPGYSGYYGGSYPSYRSTLTGVSQSLSFGRAVMSGQAFGAGVPAFGSVNFGNFGVGTGGIGILGGGVIGGGGVIGGGGVVGGGAVIGGGGGIPIGGIIRKKKY</sequence>
<protein>
    <recommendedName>
        <fullName>Shematrin-like protein 1</fullName>
    </recommendedName>
    <alternativeName>
        <fullName>Shematrin-3</fullName>
    </alternativeName>
</protein>
<keyword id="KW-0903">Direct protein sequencing</keyword>
<keyword id="KW-0964">Secreted</keyword>
<keyword id="KW-0732">Signal</keyword>
<evidence type="ECO:0000255" key="1"/>
<evidence type="ECO:0000269" key="2">
    <source>
    </source>
</evidence>
<evidence type="ECO:0000305" key="3"/>
<accession>H2A0K8</accession>
<comment type="subcellular location">
    <subcellularLocation>
        <location evidence="2">Secreted</location>
    </subcellularLocation>
</comment>
<comment type="tissue specificity">
    <text evidence="2">Prismatic layer of shell (at protein level).</text>
</comment>
<proteinExistence type="evidence at protein level"/>
<reference evidence="3" key="1">
    <citation type="journal article" date="2010" name="BMC Genomics">
        <title>Transcriptome and proteome analysis of Pinctada margaritifera calcifying mantle and shell: focus on biomineralization.</title>
        <authorList>
            <person name="Joubert C."/>
            <person name="Piquemal D."/>
            <person name="Marie B."/>
            <person name="Manchon L."/>
            <person name="Pierrat F."/>
            <person name="Zanella-Cleon I."/>
            <person name="Cochennec-Laureau N."/>
            <person name="Gueguen Y."/>
            <person name="Montagnani C."/>
        </authorList>
    </citation>
    <scope>NUCLEOTIDE SEQUENCE [MRNA]</scope>
    <scope>IDENTIFICATION</scope>
    <source>
        <tissue>Mantle</tissue>
    </source>
</reference>
<reference key="2">
    <citation type="journal article" date="2012" name="Proc. Natl. Acad. Sci. U.S.A.">
        <title>Different secretory repertoires control the biomineralization processes of prism and nacre deposition of the pearl oyster shell.</title>
        <authorList>
            <person name="Marie B."/>
            <person name="Joubert C."/>
            <person name="Tayale A."/>
            <person name="Zanella-Cleon I."/>
            <person name="Belliard C."/>
            <person name="Piquemal D."/>
            <person name="Cochennec-Laureau N."/>
            <person name="Marin F."/>
            <person name="Gueguen Y."/>
            <person name="Montagnani C."/>
        </authorList>
    </citation>
    <scope>PROTEIN SEQUENCE OF 263-276</scope>
    <scope>SUBCELLULAR LOCATION</scope>
    <scope>TISSUE SPECIFICITY</scope>
    <source>
        <tissue>Shell</tissue>
    </source>
</reference>
<organism>
    <name type="scientific">Margaritifera margaritifera</name>
    <name type="common">Freshwater pearl mussel</name>
    <dbReference type="NCBI Taxonomy" id="102329"/>
    <lineage>
        <taxon>Eukaryota</taxon>
        <taxon>Metazoa</taxon>
        <taxon>Spiralia</taxon>
        <taxon>Lophotrochozoa</taxon>
        <taxon>Mollusca</taxon>
        <taxon>Bivalvia</taxon>
        <taxon>Autobranchia</taxon>
        <taxon>Pteriomorphia</taxon>
        <taxon>Pterioida</taxon>
        <taxon>Pterioidea</taxon>
        <taxon>Pteriidae</taxon>
        <taxon>Pinctada</taxon>
    </lineage>
</organism>
<feature type="signal peptide" evidence="1">
    <location>
        <begin position="1"/>
        <end position="16"/>
    </location>
</feature>
<feature type="chain" id="PRO_0000417981" description="Shematrin-like protein 1" evidence="1">
    <location>
        <begin position="17"/>
        <end position="349"/>
    </location>
</feature>
<dbReference type="EMBL" id="HE610375">
    <property type="protein sequence ID" value="CCE46149.1"/>
    <property type="molecule type" value="mRNA"/>
</dbReference>
<dbReference type="GO" id="GO:0005576">
    <property type="term" value="C:extracellular region"/>
    <property type="evidence" value="ECO:0007669"/>
    <property type="project" value="UniProtKB-SubCell"/>
</dbReference>